<name>GC_MEHVH</name>
<feature type="signal peptide" evidence="1">
    <location>
        <begin position="1"/>
        <end position="32"/>
    </location>
</feature>
<feature type="chain" id="PRO_0000038211" description="Envelope glycoprotein C homolog">
    <location>
        <begin position="33"/>
        <end position="489"/>
    </location>
</feature>
<feature type="topological domain" description="Virion surface" evidence="1">
    <location>
        <begin position="33"/>
        <end position="455"/>
    </location>
</feature>
<feature type="transmembrane region" description="Helical" evidence="1">
    <location>
        <begin position="456"/>
        <end position="486"/>
    </location>
</feature>
<feature type="topological domain" description="Cytoplasmic" evidence="1">
    <location>
        <begin position="487"/>
        <end position="489"/>
    </location>
</feature>
<feature type="domain" description="Ig-like">
    <location>
        <begin position="250"/>
        <end position="348"/>
    </location>
</feature>
<feature type="region of interest" description="Disordered" evidence="2">
    <location>
        <begin position="59"/>
        <end position="94"/>
    </location>
</feature>
<feature type="compositionally biased region" description="Polar residues" evidence="2">
    <location>
        <begin position="60"/>
        <end position="69"/>
    </location>
</feature>
<feature type="compositionally biased region" description="Low complexity" evidence="2">
    <location>
        <begin position="70"/>
        <end position="81"/>
    </location>
</feature>
<feature type="glycosylation site" description="N-linked (GlcNAc...) asparagine; by host" evidence="1">
    <location>
        <position position="92"/>
    </location>
</feature>
<feature type="glycosylation site" description="N-linked (GlcNAc...) asparagine; by host" evidence="1">
    <location>
        <position position="112"/>
    </location>
</feature>
<feature type="glycosylation site" description="N-linked (GlcNAc...) asparagine; by host" evidence="1">
    <location>
        <position position="204"/>
    </location>
</feature>
<feature type="glycosylation site" description="N-linked (GlcNAc...) asparagine; by host" evidence="1">
    <location>
        <position position="346"/>
    </location>
</feature>
<feature type="glycosylation site" description="N-linked (GlcNAc...) asparagine; by host" evidence="1">
    <location>
        <position position="392"/>
    </location>
</feature>
<sequence length="489" mass="54718">MVSNMRVLRVLRLTGWVGIFLVLSLQQTSCAGLPHNVDTHHILTFNPSPISADGVPLSEVPNSPTTELSTTVATKTAVPTTESTSSSEAHRNSSHKIPDIICDREEVFVFLNNTGRILCDLIVDPPSDDEWSNFALDVTFNPIEYHANEKNVEVARVAGLYGVPGSDYAYPRKSELISSIRRDPQGSFWTSPTPRGNKYFIWINKTMHTMGVEVRNVDYKDNGYFQVILRDRFNRPLVEKHIYMRVCQRPASVDVLAPPVLSGENYKASCIVRHFYPPGSVYVSWRRNGNIATPRKDRDGSFWWFESGRGATLVSTITLGNSGLESPPKVSCLVAWRQGDMISTSNATAVPTVYYHPRISLAFKDGYAICTIECVPSGITVRWLVHDEPQPNTTYDTVVTGLCRTIDRYRNLASRIPVQDNWAKTKYTCRLIGYPFDVDRFQNSEYYDATPSARGMPMIVTITAVLGLALFLGIGIIITALCFYLPGRN</sequence>
<gene>
    <name type="primary">gC</name>
    <name type="ORF">GA</name>
</gene>
<proteinExistence type="inferred from homology"/>
<organismHost>
    <name type="scientific">Gallus gallus</name>
    <name type="common">Chicken</name>
    <dbReference type="NCBI Taxonomy" id="9031"/>
</organismHost>
<organismHost>
    <name type="scientific">Meleagris gallopavo</name>
    <name type="common">Wild turkey</name>
    <dbReference type="NCBI Taxonomy" id="9103"/>
</organismHost>
<accession>P18535</accession>
<keyword id="KW-0325">Glycoprotein</keyword>
<keyword id="KW-0945">Host-virus interaction</keyword>
<keyword id="KW-0393">Immunoglobulin domain</keyword>
<keyword id="KW-0472">Membrane</keyword>
<keyword id="KW-0732">Signal</keyword>
<keyword id="KW-0812">Transmembrane</keyword>
<keyword id="KW-1133">Transmembrane helix</keyword>
<keyword id="KW-0946">Virion</keyword>
<protein>
    <recommendedName>
        <fullName>Envelope glycoprotein C homolog</fullName>
    </recommendedName>
    <alternativeName>
        <fullName>A antigen</fullName>
    </alternativeName>
    <alternativeName>
        <fullName>Glycoprotein A</fullName>
    </alternativeName>
</protein>
<reference key="1">
    <citation type="journal article" date="1989" name="Gene">
        <title>Homologies between herpesvirus of turkey and Marek's disease virus type-1 DNAs within two co-linearly arranged open reading frames, one encoding glycoprotein A.</title>
        <authorList>
            <person name="Kato A."/>
            <person name="Sato I."/>
            <person name="Ihara T."/>
            <person name="Ueda S."/>
            <person name="Ishihama A."/>
            <person name="Hirai K."/>
        </authorList>
    </citation>
    <scope>NUCLEOTIDE SEQUENCE [GENOMIC DNA]</scope>
</reference>
<comment type="subcellular location">
    <subcellularLocation>
        <location evidence="3">Virion membrane</location>
        <topology evidence="3">Single-pass membrane protein</topology>
    </subcellularLocation>
</comment>
<comment type="similarity">
    <text evidence="3">Belongs to the herpesviridae glycoprotein C family.</text>
</comment>
<organism>
    <name type="scientific">Meleagrid herpesvirus 1 (strain H2)</name>
    <name type="common">MeHV-1</name>
    <name type="synonym">Turkey herpesvirus</name>
    <dbReference type="NCBI Taxonomy" id="10392"/>
    <lineage>
        <taxon>Viruses</taxon>
        <taxon>Duplodnaviria</taxon>
        <taxon>Heunggongvirae</taxon>
        <taxon>Peploviricota</taxon>
        <taxon>Herviviricetes</taxon>
        <taxon>Herpesvirales</taxon>
        <taxon>Orthoherpesviridae</taxon>
        <taxon>Alphaherpesvirinae</taxon>
        <taxon>Mardivirus</taxon>
        <taxon>Mardivirus gallidalpha2</taxon>
        <taxon>Gallid alphaherpesvirus 2</taxon>
    </lineage>
</organism>
<dbReference type="EMBL" id="M33303">
    <property type="protein sequence ID" value="AAA46107.1"/>
    <property type="molecule type" value="Genomic_DNA"/>
</dbReference>
<dbReference type="EMBL" id="D90003">
    <property type="protein sequence ID" value="BAA14056.1"/>
    <property type="molecule type" value="Genomic_DNA"/>
</dbReference>
<dbReference type="PIR" id="JQ0162">
    <property type="entry name" value="VGBETA"/>
</dbReference>
<dbReference type="GlyCosmos" id="P18535">
    <property type="glycosylation" value="5 sites, No reported glycans"/>
</dbReference>
<dbReference type="GO" id="GO:0016020">
    <property type="term" value="C:membrane"/>
    <property type="evidence" value="ECO:0007669"/>
    <property type="project" value="UniProtKB-KW"/>
</dbReference>
<dbReference type="GO" id="GO:0055036">
    <property type="term" value="C:virion membrane"/>
    <property type="evidence" value="ECO:0007669"/>
    <property type="project" value="UniProtKB-SubCell"/>
</dbReference>
<dbReference type="Gene3D" id="2.60.40.10">
    <property type="entry name" value="Immunoglobulins"/>
    <property type="match status" value="1"/>
</dbReference>
<dbReference type="InterPro" id="IPR001038">
    <property type="entry name" value="GA_GC"/>
</dbReference>
<dbReference type="InterPro" id="IPR007110">
    <property type="entry name" value="Ig-like_dom"/>
</dbReference>
<dbReference type="InterPro" id="IPR036179">
    <property type="entry name" value="Ig-like_dom_sf"/>
</dbReference>
<dbReference type="InterPro" id="IPR013783">
    <property type="entry name" value="Ig-like_fold"/>
</dbReference>
<dbReference type="InterPro" id="IPR001654">
    <property type="entry name" value="Marek_A"/>
</dbReference>
<dbReference type="Pfam" id="PF02124">
    <property type="entry name" value="Marek_A"/>
    <property type="match status" value="1"/>
</dbReference>
<dbReference type="PRINTS" id="PR00675">
    <property type="entry name" value="MAREKSGPA"/>
</dbReference>
<dbReference type="SUPFAM" id="SSF48726">
    <property type="entry name" value="Immunoglobulin"/>
    <property type="match status" value="1"/>
</dbReference>
<dbReference type="PROSITE" id="PS50835">
    <property type="entry name" value="IG_LIKE"/>
    <property type="match status" value="1"/>
</dbReference>
<evidence type="ECO:0000255" key="1"/>
<evidence type="ECO:0000256" key="2">
    <source>
        <dbReference type="SAM" id="MobiDB-lite"/>
    </source>
</evidence>
<evidence type="ECO:0000305" key="3"/>